<evidence type="ECO:0000255" key="1">
    <source>
        <dbReference type="HAMAP-Rule" id="MF_00648"/>
    </source>
</evidence>
<dbReference type="EC" id="3.6.1.73" evidence="1"/>
<dbReference type="EMBL" id="CP000020">
    <property type="protein sequence ID" value="AAW85055.1"/>
    <property type="molecule type" value="Genomic_DNA"/>
</dbReference>
<dbReference type="RefSeq" id="WP_011261320.1">
    <property type="nucleotide sequence ID" value="NC_006840.2"/>
</dbReference>
<dbReference type="RefSeq" id="YP_203943.1">
    <property type="nucleotide sequence ID" value="NC_006840.2"/>
</dbReference>
<dbReference type="SMR" id="Q5E7E1"/>
<dbReference type="STRING" id="312309.VF_0560"/>
<dbReference type="EnsemblBacteria" id="AAW85055">
    <property type="protein sequence ID" value="AAW85055"/>
    <property type="gene ID" value="VF_0560"/>
</dbReference>
<dbReference type="GeneID" id="54163209"/>
<dbReference type="KEGG" id="vfi:VF_0560"/>
<dbReference type="PATRIC" id="fig|312309.11.peg.553"/>
<dbReference type="eggNOG" id="COG1986">
    <property type="taxonomic scope" value="Bacteria"/>
</dbReference>
<dbReference type="HOGENOM" id="CLU_087417_1_0_6"/>
<dbReference type="OrthoDB" id="6334099at2"/>
<dbReference type="Proteomes" id="UP000000537">
    <property type="component" value="Chromosome I"/>
</dbReference>
<dbReference type="GO" id="GO:0103023">
    <property type="term" value="F:ITPase activity"/>
    <property type="evidence" value="ECO:0007669"/>
    <property type="project" value="UniProtKB-EC"/>
</dbReference>
<dbReference type="GO" id="GO:0046872">
    <property type="term" value="F:metal ion binding"/>
    <property type="evidence" value="ECO:0007669"/>
    <property type="project" value="UniProtKB-KW"/>
</dbReference>
<dbReference type="GO" id="GO:0000166">
    <property type="term" value="F:nucleotide binding"/>
    <property type="evidence" value="ECO:0007669"/>
    <property type="project" value="UniProtKB-KW"/>
</dbReference>
<dbReference type="GO" id="GO:0017111">
    <property type="term" value="F:ribonucleoside triphosphate phosphatase activity"/>
    <property type="evidence" value="ECO:0000250"/>
    <property type="project" value="UniProtKB"/>
</dbReference>
<dbReference type="GO" id="GO:0009117">
    <property type="term" value="P:nucleotide metabolic process"/>
    <property type="evidence" value="ECO:0007669"/>
    <property type="project" value="UniProtKB-KW"/>
</dbReference>
<dbReference type="GO" id="GO:0006772">
    <property type="term" value="P:thiamine metabolic process"/>
    <property type="evidence" value="ECO:0007669"/>
    <property type="project" value="TreeGrafter"/>
</dbReference>
<dbReference type="FunFam" id="3.90.950.10:FF:000002">
    <property type="entry name" value="Inosine/xanthosine triphosphatase"/>
    <property type="match status" value="1"/>
</dbReference>
<dbReference type="Gene3D" id="3.90.950.10">
    <property type="match status" value="1"/>
</dbReference>
<dbReference type="HAMAP" id="MF_00648">
    <property type="entry name" value="Non_canon_purine_NTPase_YjjX"/>
    <property type="match status" value="1"/>
</dbReference>
<dbReference type="InterPro" id="IPR029001">
    <property type="entry name" value="ITPase-like_fam"/>
</dbReference>
<dbReference type="InterPro" id="IPR002786">
    <property type="entry name" value="Non_canon_purine_NTPase"/>
</dbReference>
<dbReference type="InterPro" id="IPR026533">
    <property type="entry name" value="NTPase/PRRC1"/>
</dbReference>
<dbReference type="InterPro" id="IPR050299">
    <property type="entry name" value="YjjX_NTPase"/>
</dbReference>
<dbReference type="NCBIfam" id="TIGR00258">
    <property type="entry name" value="inosine/xanthosine triphosphatase"/>
    <property type="match status" value="1"/>
</dbReference>
<dbReference type="NCBIfam" id="NF003459">
    <property type="entry name" value="PRK05074.1"/>
    <property type="match status" value="1"/>
</dbReference>
<dbReference type="PANTHER" id="PTHR34699">
    <property type="match status" value="1"/>
</dbReference>
<dbReference type="PANTHER" id="PTHR34699:SF2">
    <property type="entry name" value="NON-CANONICAL PURINE NTP PHOSPHATASE_PRRC1 DOMAIN-CONTAINING PROTEIN"/>
    <property type="match status" value="1"/>
</dbReference>
<dbReference type="Pfam" id="PF01931">
    <property type="entry name" value="NTPase_I-T"/>
    <property type="match status" value="1"/>
</dbReference>
<dbReference type="SUPFAM" id="SSF52972">
    <property type="entry name" value="ITPase-like"/>
    <property type="match status" value="1"/>
</dbReference>
<organism>
    <name type="scientific">Aliivibrio fischeri (strain ATCC 700601 / ES114)</name>
    <name type="common">Vibrio fischeri</name>
    <dbReference type="NCBI Taxonomy" id="312309"/>
    <lineage>
        <taxon>Bacteria</taxon>
        <taxon>Pseudomonadati</taxon>
        <taxon>Pseudomonadota</taxon>
        <taxon>Gammaproteobacteria</taxon>
        <taxon>Vibrionales</taxon>
        <taxon>Vibrionaceae</taxon>
        <taxon>Aliivibrio</taxon>
    </lineage>
</organism>
<comment type="function">
    <text evidence="1">Phosphatase that hydrolyzes non-canonical purine nucleotides such as XTP and ITP to their respective diphosphate derivatives. Probably excludes non-canonical purines from DNA/RNA precursor pool, thus preventing their incorporation into DNA/RNA and avoiding chromosomal lesions.</text>
</comment>
<comment type="catalytic activity">
    <reaction evidence="1">
        <text>XTP + H2O = XDP + phosphate + H(+)</text>
        <dbReference type="Rhea" id="RHEA:28406"/>
        <dbReference type="ChEBI" id="CHEBI:15377"/>
        <dbReference type="ChEBI" id="CHEBI:15378"/>
        <dbReference type="ChEBI" id="CHEBI:43474"/>
        <dbReference type="ChEBI" id="CHEBI:59884"/>
        <dbReference type="ChEBI" id="CHEBI:61314"/>
        <dbReference type="EC" id="3.6.1.73"/>
    </reaction>
</comment>
<comment type="catalytic activity">
    <reaction evidence="1">
        <text>ITP + H2O = IDP + phosphate + H(+)</text>
        <dbReference type="Rhea" id="RHEA:28330"/>
        <dbReference type="ChEBI" id="CHEBI:15377"/>
        <dbReference type="ChEBI" id="CHEBI:15378"/>
        <dbReference type="ChEBI" id="CHEBI:43474"/>
        <dbReference type="ChEBI" id="CHEBI:58280"/>
        <dbReference type="ChEBI" id="CHEBI:61402"/>
        <dbReference type="EC" id="3.6.1.73"/>
    </reaction>
</comment>
<comment type="cofactor">
    <cofactor evidence="1">
        <name>Mg(2+)</name>
        <dbReference type="ChEBI" id="CHEBI:18420"/>
    </cofactor>
    <cofactor evidence="1">
        <name>Mn(2+)</name>
        <dbReference type="ChEBI" id="CHEBI:29035"/>
    </cofactor>
    <text evidence="1">Binds 1 divalent metal cation per subunit; can use either Mg(2+) or Mn(2+).</text>
</comment>
<comment type="subunit">
    <text evidence="1">Homodimer.</text>
</comment>
<comment type="similarity">
    <text evidence="1">Belongs to the YjjX NTPase family.</text>
</comment>
<accession>Q5E7E1</accession>
<reference key="1">
    <citation type="journal article" date="2005" name="Proc. Natl. Acad. Sci. U.S.A.">
        <title>Complete genome sequence of Vibrio fischeri: a symbiotic bacterium with pathogenic congeners.</title>
        <authorList>
            <person name="Ruby E.G."/>
            <person name="Urbanowski M."/>
            <person name="Campbell J."/>
            <person name="Dunn A."/>
            <person name="Faini M."/>
            <person name="Gunsalus R."/>
            <person name="Lostroh P."/>
            <person name="Lupp C."/>
            <person name="McCann J."/>
            <person name="Millikan D."/>
            <person name="Schaefer A."/>
            <person name="Stabb E."/>
            <person name="Stevens A."/>
            <person name="Visick K."/>
            <person name="Whistler C."/>
            <person name="Greenberg E.P."/>
        </authorList>
    </citation>
    <scope>NUCLEOTIDE SEQUENCE [LARGE SCALE GENOMIC DNA]</scope>
    <source>
        <strain>ATCC 700601 / ES114</strain>
    </source>
</reference>
<feature type="chain" id="PRO_0000156351" description="Inosine/xanthosine triphosphatase">
    <location>
        <begin position="1"/>
        <end position="170"/>
    </location>
</feature>
<name>NCPP_ALIF1</name>
<protein>
    <recommendedName>
        <fullName evidence="1">Inosine/xanthosine triphosphatase</fullName>
        <shortName evidence="1">ITPase/XTPase</shortName>
        <ecNumber evidence="1">3.6.1.73</ecNumber>
    </recommendedName>
    <alternativeName>
        <fullName evidence="1">Non-canonical purine NTP phosphatase</fullName>
    </alternativeName>
    <alternativeName>
        <fullName evidence="1">Non-standard purine NTP phosphatase</fullName>
    </alternativeName>
    <alternativeName>
        <fullName evidence="1">Nucleoside-triphosphate phosphatase</fullName>
        <shortName evidence="1">NTPase</shortName>
    </alternativeName>
</protein>
<proteinExistence type="inferred from homology"/>
<sequence length="170" mass="18476">MKVIIASQNPAKIAAVESAFNLAFPNDTFSFEGVSVKSGVPDQPMSCEETKQGAMNRINNAKIKLPNCDYYVGLEAGIEGNSTFAWMIIDNGLTVGESRSSSLPLPPQVIDEVKKGKELGDVMDEQFNTDNIKQKGGAIGLLTNNLLTRTSVYQQALILALIPFLHPTRF</sequence>
<gene>
    <name type="ordered locus">VF_0560</name>
</gene>
<keyword id="KW-0378">Hydrolase</keyword>
<keyword id="KW-0460">Magnesium</keyword>
<keyword id="KW-0464">Manganese</keyword>
<keyword id="KW-0479">Metal-binding</keyword>
<keyword id="KW-0546">Nucleotide metabolism</keyword>
<keyword id="KW-0547">Nucleotide-binding</keyword>
<keyword id="KW-1185">Reference proteome</keyword>